<reference key="1">
    <citation type="journal article" date="2009" name="J. Bacteriol.">
        <title>Role of conjugative elements in the evolution of the multidrug-resistant pandemic clone Streptococcus pneumoniae Spain23F ST81.</title>
        <authorList>
            <person name="Croucher N.J."/>
            <person name="Walker D."/>
            <person name="Romero P."/>
            <person name="Lennard N."/>
            <person name="Paterson G.K."/>
            <person name="Bason N.C."/>
            <person name="Mitchell A.M."/>
            <person name="Quail M.A."/>
            <person name="Andrew P.W."/>
            <person name="Parkhill J."/>
            <person name="Bentley S.D."/>
            <person name="Mitchell T.J."/>
        </authorList>
    </citation>
    <scope>NUCLEOTIDE SEQUENCE [LARGE SCALE GENOMIC DNA]</scope>
    <source>
        <strain>ATCC 700669 / Spain 23F-1</strain>
    </source>
</reference>
<comment type="function">
    <text evidence="1">One of the early assembly proteins it binds 23S rRNA. One of the proteins that surrounds the polypeptide exit tunnel on the outside of the ribosome. Forms the main docking site for trigger factor binding to the ribosome.</text>
</comment>
<comment type="subunit">
    <text evidence="1">Part of the 50S ribosomal subunit. Contacts protein L29, and trigger factor when it is bound to the ribosome.</text>
</comment>
<comment type="similarity">
    <text evidence="1">Belongs to the universal ribosomal protein uL23 family.</text>
</comment>
<keyword id="KW-0687">Ribonucleoprotein</keyword>
<keyword id="KW-0689">Ribosomal protein</keyword>
<keyword id="KW-0694">RNA-binding</keyword>
<keyword id="KW-0699">rRNA-binding</keyword>
<name>RL23_STRPJ</name>
<proteinExistence type="inferred from homology"/>
<sequence length="98" mass="10786">MNLYDVIKKPVITESSMAQLEAGKYVFEVDTRAHKLLIKQAVEAAFEGVKVANVNTINVKPKAKRVGRYTGFTNKTKKAIITLTADSKAIELFAAEAE</sequence>
<organism>
    <name type="scientific">Streptococcus pneumoniae (strain ATCC 700669 / Spain 23F-1)</name>
    <dbReference type="NCBI Taxonomy" id="561276"/>
    <lineage>
        <taxon>Bacteria</taxon>
        <taxon>Bacillati</taxon>
        <taxon>Bacillota</taxon>
        <taxon>Bacilli</taxon>
        <taxon>Lactobacillales</taxon>
        <taxon>Streptococcaceae</taxon>
        <taxon>Streptococcus</taxon>
    </lineage>
</organism>
<evidence type="ECO:0000255" key="1">
    <source>
        <dbReference type="HAMAP-Rule" id="MF_01369"/>
    </source>
</evidence>
<evidence type="ECO:0000305" key="2"/>
<protein>
    <recommendedName>
        <fullName evidence="1">Large ribosomal subunit protein uL23</fullName>
    </recommendedName>
    <alternativeName>
        <fullName evidence="2">50S ribosomal protein L23</fullName>
    </alternativeName>
</protein>
<feature type="chain" id="PRO_1000184107" description="Large ribosomal subunit protein uL23">
    <location>
        <begin position="1"/>
        <end position="98"/>
    </location>
</feature>
<accession>B8ZKF9</accession>
<gene>
    <name evidence="1" type="primary">rplW</name>
    <name type="ordered locus">SPN23F02010</name>
</gene>
<dbReference type="EMBL" id="FM211187">
    <property type="protein sequence ID" value="CAR68061.1"/>
    <property type="molecule type" value="Genomic_DNA"/>
</dbReference>
<dbReference type="RefSeq" id="WP_001055347.1">
    <property type="nucleotide sequence ID" value="NC_011900.1"/>
</dbReference>
<dbReference type="SMR" id="B8ZKF9"/>
<dbReference type="KEGG" id="sne:SPN23F02010"/>
<dbReference type="HOGENOM" id="CLU_037562_3_2_9"/>
<dbReference type="GO" id="GO:1990904">
    <property type="term" value="C:ribonucleoprotein complex"/>
    <property type="evidence" value="ECO:0007669"/>
    <property type="project" value="UniProtKB-KW"/>
</dbReference>
<dbReference type="GO" id="GO:0005840">
    <property type="term" value="C:ribosome"/>
    <property type="evidence" value="ECO:0007669"/>
    <property type="project" value="UniProtKB-KW"/>
</dbReference>
<dbReference type="GO" id="GO:0019843">
    <property type="term" value="F:rRNA binding"/>
    <property type="evidence" value="ECO:0007669"/>
    <property type="project" value="UniProtKB-UniRule"/>
</dbReference>
<dbReference type="GO" id="GO:0003735">
    <property type="term" value="F:structural constituent of ribosome"/>
    <property type="evidence" value="ECO:0007669"/>
    <property type="project" value="InterPro"/>
</dbReference>
<dbReference type="GO" id="GO:0006412">
    <property type="term" value="P:translation"/>
    <property type="evidence" value="ECO:0007669"/>
    <property type="project" value="UniProtKB-UniRule"/>
</dbReference>
<dbReference type="FunFam" id="3.30.70.330:FF:000001">
    <property type="entry name" value="50S ribosomal protein L23"/>
    <property type="match status" value="1"/>
</dbReference>
<dbReference type="Gene3D" id="3.30.70.330">
    <property type="match status" value="1"/>
</dbReference>
<dbReference type="HAMAP" id="MF_01369_B">
    <property type="entry name" value="Ribosomal_uL23_B"/>
    <property type="match status" value="1"/>
</dbReference>
<dbReference type="InterPro" id="IPR012677">
    <property type="entry name" value="Nucleotide-bd_a/b_plait_sf"/>
</dbReference>
<dbReference type="InterPro" id="IPR013025">
    <property type="entry name" value="Ribosomal_uL23-like"/>
</dbReference>
<dbReference type="InterPro" id="IPR012678">
    <property type="entry name" value="Ribosomal_uL23/eL15/eS24_sf"/>
</dbReference>
<dbReference type="InterPro" id="IPR001014">
    <property type="entry name" value="Ribosomal_uL23_CS"/>
</dbReference>
<dbReference type="NCBIfam" id="NF004361">
    <property type="entry name" value="PRK05738.2-1"/>
    <property type="match status" value="1"/>
</dbReference>
<dbReference type="NCBIfam" id="NF004363">
    <property type="entry name" value="PRK05738.2-4"/>
    <property type="match status" value="1"/>
</dbReference>
<dbReference type="PANTHER" id="PTHR11620">
    <property type="entry name" value="60S RIBOSOMAL PROTEIN L23A"/>
    <property type="match status" value="1"/>
</dbReference>
<dbReference type="Pfam" id="PF00276">
    <property type="entry name" value="Ribosomal_L23"/>
    <property type="match status" value="1"/>
</dbReference>
<dbReference type="SUPFAM" id="SSF54189">
    <property type="entry name" value="Ribosomal proteins S24e, L23 and L15e"/>
    <property type="match status" value="1"/>
</dbReference>
<dbReference type="PROSITE" id="PS00050">
    <property type="entry name" value="RIBOSOMAL_L23"/>
    <property type="match status" value="1"/>
</dbReference>